<comment type="function">
    <text evidence="1">Receptor for melanin-concentrating hormone, coupled to both G proteins that inhibit adenylyl cyclase and G proteins that activate phosphoinositide hydrolysis.</text>
</comment>
<comment type="subunit">
    <text evidence="1">Interacts with NCDN.</text>
</comment>
<comment type="subcellular location">
    <subcellularLocation>
        <location evidence="1">Cell membrane</location>
        <topology evidence="2">Multi-pass membrane protein</topology>
    </subcellularLocation>
</comment>
<comment type="similarity">
    <text evidence="3">Belongs to the G-protein coupled receptor 1 family.</text>
</comment>
<name>MCHR1_PIG</name>
<protein>
    <recommendedName>
        <fullName evidence="1">Melanin-concentrating hormone receptor 1</fullName>
        <shortName>MCH receptor 1</shortName>
        <shortName>MCH-R1</shortName>
        <shortName>MCHR-1</shortName>
    </recommendedName>
    <alternativeName>
        <fullName>G-protein coupled receptor 24</fullName>
    </alternativeName>
    <alternativeName>
        <fullName>MCH-1R</fullName>
        <shortName>MCH1R</shortName>
        <shortName>MCHR</shortName>
    </alternativeName>
</protein>
<proteinExistence type="evidence at transcript level"/>
<feature type="chain" id="PRO_0000069738" description="Melanin-concentrating hormone receptor 1">
    <location>
        <begin position="1"/>
        <end position="353"/>
    </location>
</feature>
<feature type="topological domain" description="Extracellular" evidence="5">
    <location>
        <begin position="1"/>
        <end position="45"/>
    </location>
</feature>
<feature type="transmembrane region" description="Helical" evidence="2">
    <location>
        <begin position="46"/>
        <end position="66"/>
    </location>
</feature>
<feature type="topological domain" description="Cytoplasmic" evidence="5">
    <location>
        <begin position="67"/>
        <end position="79"/>
    </location>
</feature>
<feature type="transmembrane region" description="Helical" evidence="2">
    <location>
        <begin position="80"/>
        <end position="100"/>
    </location>
</feature>
<feature type="topological domain" description="Extracellular" evidence="5">
    <location>
        <begin position="101"/>
        <end position="116"/>
    </location>
</feature>
<feature type="transmembrane region" description="Helical" evidence="2">
    <location>
        <begin position="117"/>
        <end position="139"/>
    </location>
</feature>
<feature type="topological domain" description="Cytoplasmic" evidence="5">
    <location>
        <begin position="140"/>
        <end position="161"/>
    </location>
</feature>
<feature type="transmembrane region" description="Helical" evidence="2">
    <location>
        <begin position="162"/>
        <end position="182"/>
    </location>
</feature>
<feature type="topological domain" description="Extracellular" evidence="5">
    <location>
        <begin position="183"/>
        <end position="204"/>
    </location>
</feature>
<feature type="transmembrane region" description="Helical" evidence="2">
    <location>
        <begin position="205"/>
        <end position="225"/>
    </location>
</feature>
<feature type="topological domain" description="Cytoplasmic" evidence="5">
    <location>
        <begin position="226"/>
        <end position="256"/>
    </location>
</feature>
<feature type="transmembrane region" description="Helical" evidence="2">
    <location>
        <begin position="257"/>
        <end position="277"/>
    </location>
</feature>
<feature type="topological domain" description="Extracellular" evidence="5">
    <location>
        <begin position="278"/>
        <end position="294"/>
    </location>
</feature>
<feature type="transmembrane region" description="Helical" evidence="2">
    <location>
        <begin position="295"/>
        <end position="315"/>
    </location>
</feature>
<feature type="topological domain" description="Cytoplasmic" evidence="5">
    <location>
        <begin position="316"/>
        <end position="353"/>
    </location>
</feature>
<feature type="region of interest" description="Disordered" evidence="4">
    <location>
        <begin position="1"/>
        <end position="28"/>
    </location>
</feature>
<feature type="compositionally biased region" description="Polar residues" evidence="4">
    <location>
        <begin position="12"/>
        <end position="26"/>
    </location>
</feature>
<feature type="glycosylation site" description="N-linked (GlcNAc...) asparagine" evidence="2">
    <location>
        <position position="13"/>
    </location>
</feature>
<feature type="glycosylation site" description="N-linked (GlcNAc...) asparagine" evidence="2">
    <location>
        <position position="16"/>
    </location>
</feature>
<feature type="glycosylation site" description="N-linked (GlcNAc...) asparagine" evidence="2">
    <location>
        <position position="23"/>
    </location>
</feature>
<feature type="disulfide bond" evidence="3">
    <location>
        <begin position="116"/>
        <end position="194"/>
    </location>
</feature>
<feature type="sequence conflict" description="In Ref. 1; CAI30143." evidence="5" ref="1">
    <original>E</original>
    <variation>G</variation>
    <location>
        <position position="4"/>
    </location>
</feature>
<accession>Q9MZ01</accession>
<accession>F1SRB6</accession>
<accession>Q5QPY1</accession>
<evidence type="ECO:0000250" key="1">
    <source>
        <dbReference type="UniProtKB" id="Q99705"/>
    </source>
</evidence>
<evidence type="ECO:0000255" key="2"/>
<evidence type="ECO:0000255" key="3">
    <source>
        <dbReference type="PROSITE-ProRule" id="PRU00521"/>
    </source>
</evidence>
<evidence type="ECO:0000256" key="4">
    <source>
        <dbReference type="SAM" id="MobiDB-lite"/>
    </source>
</evidence>
<evidence type="ECO:0000305" key="5"/>
<organism>
    <name type="scientific">Sus scrofa</name>
    <name type="common">Pig</name>
    <dbReference type="NCBI Taxonomy" id="9823"/>
    <lineage>
        <taxon>Eukaryota</taxon>
        <taxon>Metazoa</taxon>
        <taxon>Chordata</taxon>
        <taxon>Craniata</taxon>
        <taxon>Vertebrata</taxon>
        <taxon>Euteleostomi</taxon>
        <taxon>Mammalia</taxon>
        <taxon>Eutheria</taxon>
        <taxon>Laurasiatheria</taxon>
        <taxon>Artiodactyla</taxon>
        <taxon>Suina</taxon>
        <taxon>Suidae</taxon>
        <taxon>Sus</taxon>
    </lineage>
</organism>
<reference key="1">
    <citation type="journal article" date="2004" name="Diabetologia">
        <title>Cloning and functional characterization of porcine melanin-concentrating hormone receptor 1 (MCH1-R).</title>
        <authorList>
            <person name="Prestle J."/>
            <person name="Adomeit A."/>
            <person name="Hammer E."/>
            <person name="Ziehar T."/>
            <person name="Missler B."/>
            <person name="Appl T."/>
            <person name="Schindler M."/>
        </authorList>
    </citation>
    <scope>NUCLEOTIDE SEQUENCE [MRNA]</scope>
    <source>
        <tissue>Brain</tissue>
    </source>
</reference>
<reference key="2">
    <citation type="submission" date="2000-06" db="EMBL/GenBank/DDBJ databases">
        <title>Sus scrofa melanin-concentrating hormone (MCH) receptor.</title>
        <authorList>
            <person name="Matteri R.L."/>
        </authorList>
    </citation>
    <scope>NUCLEOTIDE SEQUENCE [MRNA]</scope>
    <source>
        <tissue>Hypothalamus</tissue>
    </source>
</reference>
<dbReference type="EMBL" id="AJ867484">
    <property type="protein sequence ID" value="CAI30143.1"/>
    <property type="molecule type" value="mRNA"/>
</dbReference>
<dbReference type="EMBL" id="AF273611">
    <property type="protein sequence ID" value="AAF81827.1"/>
    <property type="molecule type" value="mRNA"/>
</dbReference>
<dbReference type="RefSeq" id="NP_001008684.1">
    <property type="nucleotide sequence ID" value="NM_001008684.1"/>
</dbReference>
<dbReference type="SMR" id="Q9MZ01"/>
<dbReference type="STRING" id="9823.ENSSSCP00000000079"/>
<dbReference type="GlyGen" id="Q9MZ01">
    <property type="glycosylation" value="3 sites"/>
</dbReference>
<dbReference type="PaxDb" id="9823-ENSSSCP00000000079"/>
<dbReference type="Ensembl" id="ENSSSCT00000000080.5">
    <property type="protein sequence ID" value="ENSSSCP00000000079.4"/>
    <property type="gene ID" value="ENSSSCG00000000074.5"/>
</dbReference>
<dbReference type="Ensembl" id="ENSSSCT00105070786">
    <property type="protein sequence ID" value="ENSSSCP00105050104"/>
    <property type="gene ID" value="ENSSSCG00105037126"/>
</dbReference>
<dbReference type="Ensembl" id="ENSSSCT00130033888">
    <property type="protein sequence ID" value="ENSSSCP00130023460"/>
    <property type="gene ID" value="ENSSSCG00130017251"/>
</dbReference>
<dbReference type="GeneID" id="397295"/>
<dbReference type="KEGG" id="ssc:397295"/>
<dbReference type="CTD" id="2847"/>
<dbReference type="VGNC" id="VGNC:103300">
    <property type="gene designation" value="MCHR1"/>
</dbReference>
<dbReference type="eggNOG" id="KOG3656">
    <property type="taxonomic scope" value="Eukaryota"/>
</dbReference>
<dbReference type="GeneTree" id="ENSGT00940000154272"/>
<dbReference type="HOGENOM" id="CLU_009579_8_1_1"/>
<dbReference type="InParanoid" id="Q9MZ01"/>
<dbReference type="OMA" id="KSKFHGC"/>
<dbReference type="OrthoDB" id="6076970at2759"/>
<dbReference type="TreeFam" id="TF315737"/>
<dbReference type="Reactome" id="R-SSC-375276">
    <property type="pathway name" value="Peptide ligand-binding receptors"/>
</dbReference>
<dbReference type="Reactome" id="R-SSC-416476">
    <property type="pathway name" value="G alpha (q) signalling events"/>
</dbReference>
<dbReference type="Reactome" id="R-SSC-418594">
    <property type="pathway name" value="G alpha (i) signalling events"/>
</dbReference>
<dbReference type="Reactome" id="R-SSC-5620922">
    <property type="pathway name" value="BBSome-mediated cargo-targeting to cilium"/>
</dbReference>
<dbReference type="Proteomes" id="UP000008227">
    <property type="component" value="Chromosome 5"/>
</dbReference>
<dbReference type="Proteomes" id="UP000314985">
    <property type="component" value="Unplaced"/>
</dbReference>
<dbReference type="Proteomes" id="UP000694570">
    <property type="component" value="Unplaced"/>
</dbReference>
<dbReference type="Proteomes" id="UP000694571">
    <property type="component" value="Unplaced"/>
</dbReference>
<dbReference type="Proteomes" id="UP000694720">
    <property type="component" value="Unplaced"/>
</dbReference>
<dbReference type="Proteomes" id="UP000694722">
    <property type="component" value="Unplaced"/>
</dbReference>
<dbReference type="Proteomes" id="UP000694723">
    <property type="component" value="Unplaced"/>
</dbReference>
<dbReference type="Proteomes" id="UP000694724">
    <property type="component" value="Unplaced"/>
</dbReference>
<dbReference type="Proteomes" id="UP000694725">
    <property type="component" value="Unplaced"/>
</dbReference>
<dbReference type="Proteomes" id="UP000694726">
    <property type="component" value="Unplaced"/>
</dbReference>
<dbReference type="Proteomes" id="UP000694727">
    <property type="component" value="Unplaced"/>
</dbReference>
<dbReference type="Proteomes" id="UP000694728">
    <property type="component" value="Unplaced"/>
</dbReference>
<dbReference type="Bgee" id="ENSSSCG00000000074">
    <property type="expression patterns" value="Expressed in frontal cortex and 11 other cell types or tissues"/>
</dbReference>
<dbReference type="GO" id="GO:0060170">
    <property type="term" value="C:ciliary membrane"/>
    <property type="evidence" value="ECO:0007669"/>
    <property type="project" value="Ensembl"/>
</dbReference>
<dbReference type="GO" id="GO:0043005">
    <property type="term" value="C:neuron projection"/>
    <property type="evidence" value="ECO:0007669"/>
    <property type="project" value="Ensembl"/>
</dbReference>
<dbReference type="GO" id="GO:0097730">
    <property type="term" value="C:non-motile cilium"/>
    <property type="evidence" value="ECO:0007669"/>
    <property type="project" value="Ensembl"/>
</dbReference>
<dbReference type="GO" id="GO:0030273">
    <property type="term" value="F:melanin-concentrating hormone receptor activity"/>
    <property type="evidence" value="ECO:0007669"/>
    <property type="project" value="InterPro"/>
</dbReference>
<dbReference type="GO" id="GO:0005102">
    <property type="term" value="F:signaling receptor binding"/>
    <property type="evidence" value="ECO:0007669"/>
    <property type="project" value="Ensembl"/>
</dbReference>
<dbReference type="GO" id="GO:0007218">
    <property type="term" value="P:neuropeptide signaling pathway"/>
    <property type="evidence" value="ECO:0007669"/>
    <property type="project" value="InterPro"/>
</dbReference>
<dbReference type="CDD" id="cd15338">
    <property type="entry name" value="7tmA_MCHR1"/>
    <property type="match status" value="1"/>
</dbReference>
<dbReference type="FunFam" id="1.20.1070.10:FF:000115">
    <property type="entry name" value="Melanin-concentrating hormone receptor 1"/>
    <property type="match status" value="1"/>
</dbReference>
<dbReference type="Gene3D" id="1.20.1070.10">
    <property type="entry name" value="Rhodopsin 7-helix transmembrane proteins"/>
    <property type="match status" value="1"/>
</dbReference>
<dbReference type="InterPro" id="IPR000276">
    <property type="entry name" value="GPCR_Rhodpsn"/>
</dbReference>
<dbReference type="InterPro" id="IPR017452">
    <property type="entry name" value="GPCR_Rhodpsn_7TM"/>
</dbReference>
<dbReference type="InterPro" id="IPR008361">
    <property type="entry name" value="MCH_rcpt"/>
</dbReference>
<dbReference type="InterPro" id="IPR004047">
    <property type="entry name" value="MCHR1"/>
</dbReference>
<dbReference type="PANTHER" id="PTHR24229:SF91">
    <property type="entry name" value="MELANIN-CONCENTRATING HORMONE RECEPTOR 1"/>
    <property type="match status" value="1"/>
</dbReference>
<dbReference type="PANTHER" id="PTHR24229">
    <property type="entry name" value="NEUROPEPTIDES RECEPTOR"/>
    <property type="match status" value="1"/>
</dbReference>
<dbReference type="Pfam" id="PF00001">
    <property type="entry name" value="7tm_1"/>
    <property type="match status" value="1"/>
</dbReference>
<dbReference type="PRINTS" id="PR00237">
    <property type="entry name" value="GPCRRHODOPSN"/>
</dbReference>
<dbReference type="PRINTS" id="PR01507">
    <property type="entry name" value="MCH1RECEPTOR"/>
</dbReference>
<dbReference type="PRINTS" id="PR01783">
    <property type="entry name" value="MCHRECEPTOR"/>
</dbReference>
<dbReference type="SUPFAM" id="SSF81321">
    <property type="entry name" value="Family A G protein-coupled receptor-like"/>
    <property type="match status" value="1"/>
</dbReference>
<dbReference type="PROSITE" id="PS50262">
    <property type="entry name" value="G_PROTEIN_RECEP_F1_2"/>
    <property type="match status" value="1"/>
</dbReference>
<sequence length="353" mass="39021">MDLEASLLPTGPNASNTSDGPDNLTSAGPPPRTGSISYVNIIMPSVFGTICLLGIIGNSMVIFAVVKKSKLHWFSNVPDIFIINLSVVDLLFLLGMPFMIHQLMGNGVWHFGETMCTLITAMDANSQFTSTYILTAMAIDRYLATVHPISSTRFRKPSVATLVICLLWALSIISITPVWLYARLIPFPGGTVGCGIRLPNPDTDLYWFTLYQFFLAFALPFVVITAAYVRILQRMTSSVAPASQRSIRLRTKRVTRTAIAICLVFFVCWAPYYVLQLTQLSISRPTLTFVYLYNAAISLGYANSCLNPFVYIVLCETFRKRLVLSVKPAAQGQLRAVSNAQTAEEERTESKGT</sequence>
<keyword id="KW-1003">Cell membrane</keyword>
<keyword id="KW-1015">Disulfide bond</keyword>
<keyword id="KW-0297">G-protein coupled receptor</keyword>
<keyword id="KW-0325">Glycoprotein</keyword>
<keyword id="KW-0472">Membrane</keyword>
<keyword id="KW-0675">Receptor</keyword>
<keyword id="KW-1185">Reference proteome</keyword>
<keyword id="KW-0807">Transducer</keyword>
<keyword id="KW-0812">Transmembrane</keyword>
<keyword id="KW-1133">Transmembrane helix</keyword>
<gene>
    <name evidence="1" type="primary">MCHR1</name>
    <name type="synonym">GPR24</name>
</gene>